<dbReference type="EMBL" id="BX569694">
    <property type="protein sequence ID" value="CAE08591.1"/>
    <property type="molecule type" value="Genomic_DNA"/>
</dbReference>
<dbReference type="RefSeq" id="WP_011128934.1">
    <property type="nucleotide sequence ID" value="NC_005070.1"/>
</dbReference>
<dbReference type="SMR" id="Q7U4J1"/>
<dbReference type="STRING" id="84588.SYNW2076"/>
<dbReference type="KEGG" id="syw:SYNW2076"/>
<dbReference type="eggNOG" id="COG0186">
    <property type="taxonomic scope" value="Bacteria"/>
</dbReference>
<dbReference type="HOGENOM" id="CLU_073626_1_2_3"/>
<dbReference type="Proteomes" id="UP000001422">
    <property type="component" value="Chromosome"/>
</dbReference>
<dbReference type="GO" id="GO:0022627">
    <property type="term" value="C:cytosolic small ribosomal subunit"/>
    <property type="evidence" value="ECO:0007669"/>
    <property type="project" value="TreeGrafter"/>
</dbReference>
<dbReference type="GO" id="GO:0019843">
    <property type="term" value="F:rRNA binding"/>
    <property type="evidence" value="ECO:0007669"/>
    <property type="project" value="UniProtKB-UniRule"/>
</dbReference>
<dbReference type="GO" id="GO:0003735">
    <property type="term" value="F:structural constituent of ribosome"/>
    <property type="evidence" value="ECO:0007669"/>
    <property type="project" value="InterPro"/>
</dbReference>
<dbReference type="GO" id="GO:0006412">
    <property type="term" value="P:translation"/>
    <property type="evidence" value="ECO:0007669"/>
    <property type="project" value="UniProtKB-UniRule"/>
</dbReference>
<dbReference type="CDD" id="cd00364">
    <property type="entry name" value="Ribosomal_uS17"/>
    <property type="match status" value="1"/>
</dbReference>
<dbReference type="Gene3D" id="2.40.50.140">
    <property type="entry name" value="Nucleic acid-binding proteins"/>
    <property type="match status" value="1"/>
</dbReference>
<dbReference type="HAMAP" id="MF_01345_B">
    <property type="entry name" value="Ribosomal_uS17_B"/>
    <property type="match status" value="1"/>
</dbReference>
<dbReference type="InterPro" id="IPR012340">
    <property type="entry name" value="NA-bd_OB-fold"/>
</dbReference>
<dbReference type="InterPro" id="IPR000266">
    <property type="entry name" value="Ribosomal_uS17"/>
</dbReference>
<dbReference type="InterPro" id="IPR019984">
    <property type="entry name" value="Ribosomal_uS17_bact/chlr"/>
</dbReference>
<dbReference type="NCBIfam" id="NF004123">
    <property type="entry name" value="PRK05610.1"/>
    <property type="match status" value="1"/>
</dbReference>
<dbReference type="NCBIfam" id="TIGR03635">
    <property type="entry name" value="uS17_bact"/>
    <property type="match status" value="1"/>
</dbReference>
<dbReference type="PANTHER" id="PTHR10744">
    <property type="entry name" value="40S RIBOSOMAL PROTEIN S11 FAMILY MEMBER"/>
    <property type="match status" value="1"/>
</dbReference>
<dbReference type="PANTHER" id="PTHR10744:SF1">
    <property type="entry name" value="SMALL RIBOSOMAL SUBUNIT PROTEIN US17M"/>
    <property type="match status" value="1"/>
</dbReference>
<dbReference type="Pfam" id="PF00366">
    <property type="entry name" value="Ribosomal_S17"/>
    <property type="match status" value="1"/>
</dbReference>
<dbReference type="PRINTS" id="PR00973">
    <property type="entry name" value="RIBOSOMALS17"/>
</dbReference>
<dbReference type="SUPFAM" id="SSF50249">
    <property type="entry name" value="Nucleic acid-binding proteins"/>
    <property type="match status" value="1"/>
</dbReference>
<reference key="1">
    <citation type="journal article" date="2003" name="Nature">
        <title>The genome of a motile marine Synechococcus.</title>
        <authorList>
            <person name="Palenik B."/>
            <person name="Brahamsha B."/>
            <person name="Larimer F.W."/>
            <person name="Land M.L."/>
            <person name="Hauser L."/>
            <person name="Chain P."/>
            <person name="Lamerdin J.E."/>
            <person name="Regala W."/>
            <person name="Allen E.E."/>
            <person name="McCarren J."/>
            <person name="Paulsen I.T."/>
            <person name="Dufresne A."/>
            <person name="Partensky F."/>
            <person name="Webb E.A."/>
            <person name="Waterbury J."/>
        </authorList>
    </citation>
    <scope>NUCLEOTIDE SEQUENCE [LARGE SCALE GENOMIC DNA]</scope>
    <source>
        <strain>WH8102</strain>
    </source>
</reference>
<accession>Q7U4J1</accession>
<feature type="chain" id="PRO_0000233592" description="Small ribosomal subunit protein uS17">
    <location>
        <begin position="1"/>
        <end position="103"/>
    </location>
</feature>
<feature type="region of interest" description="Disordered" evidence="2">
    <location>
        <begin position="78"/>
        <end position="103"/>
    </location>
</feature>
<proteinExistence type="inferred from homology"/>
<keyword id="KW-0687">Ribonucleoprotein</keyword>
<keyword id="KW-0689">Ribosomal protein</keyword>
<keyword id="KW-0694">RNA-binding</keyword>
<keyword id="KW-0699">rRNA-binding</keyword>
<gene>
    <name evidence="1" type="primary">rpsQ</name>
    <name evidence="1" type="synonym">rps17</name>
    <name type="ordered locus">SYNW2076</name>
</gene>
<sequence>MAVKERVGTVVSDKMEKTVVVAVESRFPHPIYQKTVSRTTRYKAHDEDNSCRVGDRVRITETRPMSRHKRWAIAEVLSHSPKADKSAGSTAPAPEAAAKEVSE</sequence>
<protein>
    <recommendedName>
        <fullName evidence="1">Small ribosomal subunit protein uS17</fullName>
    </recommendedName>
    <alternativeName>
        <fullName evidence="3">30S ribosomal protein S17</fullName>
    </alternativeName>
</protein>
<organism>
    <name type="scientific">Parasynechococcus marenigrum (strain WH8102)</name>
    <dbReference type="NCBI Taxonomy" id="84588"/>
    <lineage>
        <taxon>Bacteria</taxon>
        <taxon>Bacillati</taxon>
        <taxon>Cyanobacteriota</taxon>
        <taxon>Cyanophyceae</taxon>
        <taxon>Synechococcales</taxon>
        <taxon>Prochlorococcaceae</taxon>
        <taxon>Parasynechococcus</taxon>
        <taxon>Parasynechococcus marenigrum</taxon>
    </lineage>
</organism>
<name>RS17_PARMW</name>
<evidence type="ECO:0000255" key="1">
    <source>
        <dbReference type="HAMAP-Rule" id="MF_01345"/>
    </source>
</evidence>
<evidence type="ECO:0000256" key="2">
    <source>
        <dbReference type="SAM" id="MobiDB-lite"/>
    </source>
</evidence>
<evidence type="ECO:0000305" key="3"/>
<comment type="function">
    <text evidence="1">One of the primary rRNA binding proteins, it binds specifically to the 5'-end of 16S ribosomal RNA.</text>
</comment>
<comment type="subunit">
    <text evidence="1">Part of the 30S ribosomal subunit.</text>
</comment>
<comment type="similarity">
    <text evidence="1">Belongs to the universal ribosomal protein uS17 family.</text>
</comment>